<sequence>MASQLALKSRIASTGSLEKIFNAQEMIAASHIAQARQLALDSKPYTDAIFDAVQTLVSHTHISHPIVKKDEGNPRVAVLALTADRGMAGAYTSSIIRETEDLLARLEGEGKQPQLYVYGRRGVSYYHYRNRPLAQSWEGDTEKPGVEVANAISRALLKAYMEPVDEGGVAELYIVYTEFINMVVQKVRVLRMLPVEVVKEDKSHLNVPDTTTAPQVRPLYSFEPSLDEVLDTVLPRYVRSRIHECLFEAAASEVACRQNAMHTATENARDLINDLTRKLNASRQASITQELTEIIGSADALNKKEE</sequence>
<dbReference type="EMBL" id="CP001213">
    <property type="protein sequence ID" value="ACL28924.1"/>
    <property type="molecule type" value="Genomic_DNA"/>
</dbReference>
<dbReference type="RefSeq" id="WP_004219178.1">
    <property type="nucleotide sequence ID" value="NC_011835.1"/>
</dbReference>
<dbReference type="SMR" id="B8DWS3"/>
<dbReference type="STRING" id="442563.BLA_0631"/>
<dbReference type="KEGG" id="bla:BLA_0631"/>
<dbReference type="HOGENOM" id="CLU_050669_0_0_11"/>
<dbReference type="Proteomes" id="UP000002456">
    <property type="component" value="Chromosome"/>
</dbReference>
<dbReference type="GO" id="GO:0005886">
    <property type="term" value="C:plasma membrane"/>
    <property type="evidence" value="ECO:0007669"/>
    <property type="project" value="UniProtKB-SubCell"/>
</dbReference>
<dbReference type="GO" id="GO:0045259">
    <property type="term" value="C:proton-transporting ATP synthase complex"/>
    <property type="evidence" value="ECO:0007669"/>
    <property type="project" value="UniProtKB-KW"/>
</dbReference>
<dbReference type="GO" id="GO:0005524">
    <property type="term" value="F:ATP binding"/>
    <property type="evidence" value="ECO:0007669"/>
    <property type="project" value="UniProtKB-UniRule"/>
</dbReference>
<dbReference type="GO" id="GO:0046933">
    <property type="term" value="F:proton-transporting ATP synthase activity, rotational mechanism"/>
    <property type="evidence" value="ECO:0007669"/>
    <property type="project" value="UniProtKB-UniRule"/>
</dbReference>
<dbReference type="GO" id="GO:0042777">
    <property type="term" value="P:proton motive force-driven plasma membrane ATP synthesis"/>
    <property type="evidence" value="ECO:0007669"/>
    <property type="project" value="UniProtKB-UniRule"/>
</dbReference>
<dbReference type="CDD" id="cd12151">
    <property type="entry name" value="F1-ATPase_gamma"/>
    <property type="match status" value="1"/>
</dbReference>
<dbReference type="Gene3D" id="3.40.1380.10">
    <property type="match status" value="1"/>
</dbReference>
<dbReference type="Gene3D" id="1.10.287.80">
    <property type="entry name" value="ATP synthase, gamma subunit, helix hairpin domain"/>
    <property type="match status" value="2"/>
</dbReference>
<dbReference type="HAMAP" id="MF_00815">
    <property type="entry name" value="ATP_synth_gamma_bact"/>
    <property type="match status" value="1"/>
</dbReference>
<dbReference type="InterPro" id="IPR035968">
    <property type="entry name" value="ATP_synth_F1_ATPase_gsu"/>
</dbReference>
<dbReference type="InterPro" id="IPR000131">
    <property type="entry name" value="ATP_synth_F1_gsu"/>
</dbReference>
<dbReference type="NCBIfam" id="TIGR01146">
    <property type="entry name" value="ATPsyn_F1gamma"/>
    <property type="match status" value="1"/>
</dbReference>
<dbReference type="NCBIfam" id="NF004145">
    <property type="entry name" value="PRK05621.1-2"/>
    <property type="match status" value="1"/>
</dbReference>
<dbReference type="PANTHER" id="PTHR11693">
    <property type="entry name" value="ATP SYNTHASE GAMMA CHAIN"/>
    <property type="match status" value="1"/>
</dbReference>
<dbReference type="PANTHER" id="PTHR11693:SF22">
    <property type="entry name" value="ATP SYNTHASE SUBUNIT GAMMA, MITOCHONDRIAL"/>
    <property type="match status" value="1"/>
</dbReference>
<dbReference type="Pfam" id="PF00231">
    <property type="entry name" value="ATP-synt"/>
    <property type="match status" value="1"/>
</dbReference>
<dbReference type="PRINTS" id="PR00126">
    <property type="entry name" value="ATPASEGAMMA"/>
</dbReference>
<dbReference type="SUPFAM" id="SSF52943">
    <property type="entry name" value="ATP synthase (F1-ATPase), gamma subunit"/>
    <property type="match status" value="1"/>
</dbReference>
<reference key="1">
    <citation type="journal article" date="2009" name="J. Bacteriol.">
        <title>Genome sequence of the probiotic bacterium Bifidobacterium animalis subsp. lactis AD011.</title>
        <authorList>
            <person name="Kim J.F."/>
            <person name="Jeong H."/>
            <person name="Yu D.S."/>
            <person name="Choi S.-H."/>
            <person name="Hur C.-G."/>
            <person name="Park M.-S."/>
            <person name="Yoon S.H."/>
            <person name="Kim D.-W."/>
            <person name="Ji G.E."/>
            <person name="Park H.-S."/>
            <person name="Oh T.K."/>
        </authorList>
    </citation>
    <scope>NUCLEOTIDE SEQUENCE [LARGE SCALE GENOMIC DNA]</scope>
    <source>
        <strain>AD011</strain>
    </source>
</reference>
<name>ATPG_BIFA0</name>
<accession>B8DWS3</accession>
<keyword id="KW-0066">ATP synthesis</keyword>
<keyword id="KW-1003">Cell membrane</keyword>
<keyword id="KW-0139">CF(1)</keyword>
<keyword id="KW-0375">Hydrogen ion transport</keyword>
<keyword id="KW-0406">Ion transport</keyword>
<keyword id="KW-0472">Membrane</keyword>
<keyword id="KW-1185">Reference proteome</keyword>
<keyword id="KW-0813">Transport</keyword>
<protein>
    <recommendedName>
        <fullName evidence="1">ATP synthase gamma chain</fullName>
    </recommendedName>
    <alternativeName>
        <fullName evidence="1">ATP synthase F1 sector gamma subunit</fullName>
    </alternativeName>
    <alternativeName>
        <fullName evidence="1">F-ATPase gamma subunit</fullName>
    </alternativeName>
</protein>
<evidence type="ECO:0000255" key="1">
    <source>
        <dbReference type="HAMAP-Rule" id="MF_00815"/>
    </source>
</evidence>
<gene>
    <name evidence="1" type="primary">atpG</name>
    <name type="ordered locus">BLA_0631</name>
</gene>
<comment type="function">
    <text evidence="1">Produces ATP from ADP in the presence of a proton gradient across the membrane. The gamma chain is believed to be important in regulating ATPase activity and the flow of protons through the CF(0) complex.</text>
</comment>
<comment type="subunit">
    <text evidence="1">F-type ATPases have 2 components, CF(1) - the catalytic core - and CF(0) - the membrane proton channel. CF(1) has five subunits: alpha(3), beta(3), gamma(1), delta(1), epsilon(1). CF(0) has three main subunits: a, b and c.</text>
</comment>
<comment type="subcellular location">
    <subcellularLocation>
        <location evidence="1">Cell membrane</location>
        <topology evidence="1">Peripheral membrane protein</topology>
    </subcellularLocation>
</comment>
<comment type="similarity">
    <text evidence="1">Belongs to the ATPase gamma chain family.</text>
</comment>
<feature type="chain" id="PRO_1000148601" description="ATP synthase gamma chain">
    <location>
        <begin position="1"/>
        <end position="306"/>
    </location>
</feature>
<organism>
    <name type="scientific">Bifidobacterium animalis subsp. lactis (strain AD011)</name>
    <dbReference type="NCBI Taxonomy" id="442563"/>
    <lineage>
        <taxon>Bacteria</taxon>
        <taxon>Bacillati</taxon>
        <taxon>Actinomycetota</taxon>
        <taxon>Actinomycetes</taxon>
        <taxon>Bifidobacteriales</taxon>
        <taxon>Bifidobacteriaceae</taxon>
        <taxon>Bifidobacterium</taxon>
    </lineage>
</organism>
<proteinExistence type="inferred from homology"/>